<sequence>MTRIADLRRDYRRQRLLESDAAEDPIEQFRLWLTDAVNAELPEPNAMTLATVGLDGMPAARLVLLKEVDDRGFVFFTNYRSRKGRELAAHPKAALVFWWAELERQVRIEGNVEQISAAESDAYFQSRPLGSRWGAWASQQSEVLASYAELEARLAAVEAHYGENVPRPEHWGGYRVLPTLIEFWQGRPNRLHDRLCYRRQGDHWQRVRLYP</sequence>
<proteinExistence type="inferred from homology"/>
<organism>
    <name type="scientific">Thermosynechococcus vestitus (strain NIES-2133 / IAM M-273 / BP-1)</name>
    <dbReference type="NCBI Taxonomy" id="197221"/>
    <lineage>
        <taxon>Bacteria</taxon>
        <taxon>Bacillati</taxon>
        <taxon>Cyanobacteriota</taxon>
        <taxon>Cyanophyceae</taxon>
        <taxon>Acaryochloridales</taxon>
        <taxon>Thermosynechococcaceae</taxon>
        <taxon>Thermosynechococcus</taxon>
    </lineage>
</organism>
<dbReference type="EC" id="1.4.3.5" evidence="1"/>
<dbReference type="EMBL" id="BA000039">
    <property type="protein sequence ID" value="BAC07883.1"/>
    <property type="molecule type" value="Genomic_DNA"/>
</dbReference>
<dbReference type="RefSeq" id="NP_681121.1">
    <property type="nucleotide sequence ID" value="NC_004113.1"/>
</dbReference>
<dbReference type="RefSeq" id="WP_011056186.1">
    <property type="nucleotide sequence ID" value="NC_004113.1"/>
</dbReference>
<dbReference type="SMR" id="Q8DLZ5"/>
<dbReference type="STRING" id="197221.gene:10746914"/>
<dbReference type="EnsemblBacteria" id="BAC07883">
    <property type="protein sequence ID" value="BAC07883"/>
    <property type="gene ID" value="BAC07883"/>
</dbReference>
<dbReference type="KEGG" id="tel:tll0331"/>
<dbReference type="PATRIC" id="fig|197221.4.peg.348"/>
<dbReference type="eggNOG" id="COG0259">
    <property type="taxonomic scope" value="Bacteria"/>
</dbReference>
<dbReference type="UniPathway" id="UPA01068">
    <property type="reaction ID" value="UER00304"/>
</dbReference>
<dbReference type="UniPathway" id="UPA01068">
    <property type="reaction ID" value="UER00305"/>
</dbReference>
<dbReference type="Proteomes" id="UP000000440">
    <property type="component" value="Chromosome"/>
</dbReference>
<dbReference type="GO" id="GO:0010181">
    <property type="term" value="F:FMN binding"/>
    <property type="evidence" value="ECO:0007669"/>
    <property type="project" value="UniProtKB-UniRule"/>
</dbReference>
<dbReference type="GO" id="GO:0004733">
    <property type="term" value="F:pyridoxamine phosphate oxidase activity"/>
    <property type="evidence" value="ECO:0007669"/>
    <property type="project" value="UniProtKB-UniRule"/>
</dbReference>
<dbReference type="GO" id="GO:0008615">
    <property type="term" value="P:pyridoxine biosynthetic process"/>
    <property type="evidence" value="ECO:0007669"/>
    <property type="project" value="UniProtKB-KW"/>
</dbReference>
<dbReference type="FunFam" id="2.30.110.10:FF:000020">
    <property type="entry name" value="PNPO isoform 11"/>
    <property type="match status" value="1"/>
</dbReference>
<dbReference type="Gene3D" id="2.30.110.10">
    <property type="entry name" value="Electron Transport, Fmn-binding Protein, Chain A"/>
    <property type="match status" value="1"/>
</dbReference>
<dbReference type="HAMAP" id="MF_01629">
    <property type="entry name" value="PdxH"/>
    <property type="match status" value="1"/>
</dbReference>
<dbReference type="InterPro" id="IPR000659">
    <property type="entry name" value="Pyridox_Oxase"/>
</dbReference>
<dbReference type="InterPro" id="IPR019740">
    <property type="entry name" value="Pyridox_Oxase_CS"/>
</dbReference>
<dbReference type="InterPro" id="IPR011576">
    <property type="entry name" value="Pyridox_Oxase_N"/>
</dbReference>
<dbReference type="InterPro" id="IPR019576">
    <property type="entry name" value="Pyridoxamine_oxidase_dimer_C"/>
</dbReference>
<dbReference type="InterPro" id="IPR012349">
    <property type="entry name" value="Split_barrel_FMN-bd"/>
</dbReference>
<dbReference type="NCBIfam" id="TIGR00558">
    <property type="entry name" value="pdxH"/>
    <property type="match status" value="1"/>
</dbReference>
<dbReference type="NCBIfam" id="NF004231">
    <property type="entry name" value="PRK05679.1"/>
    <property type="match status" value="1"/>
</dbReference>
<dbReference type="PANTHER" id="PTHR10851:SF0">
    <property type="entry name" value="PYRIDOXINE-5'-PHOSPHATE OXIDASE"/>
    <property type="match status" value="1"/>
</dbReference>
<dbReference type="PANTHER" id="PTHR10851">
    <property type="entry name" value="PYRIDOXINE-5-PHOSPHATE OXIDASE"/>
    <property type="match status" value="1"/>
</dbReference>
<dbReference type="Pfam" id="PF10590">
    <property type="entry name" value="PNP_phzG_C"/>
    <property type="match status" value="1"/>
</dbReference>
<dbReference type="Pfam" id="PF01243">
    <property type="entry name" value="PNPOx_N"/>
    <property type="match status" value="1"/>
</dbReference>
<dbReference type="PIRSF" id="PIRSF000190">
    <property type="entry name" value="Pyd_amn-ph_oxd"/>
    <property type="match status" value="1"/>
</dbReference>
<dbReference type="SUPFAM" id="SSF50475">
    <property type="entry name" value="FMN-binding split barrel"/>
    <property type="match status" value="1"/>
</dbReference>
<dbReference type="PROSITE" id="PS01064">
    <property type="entry name" value="PYRIDOX_OXIDASE"/>
    <property type="match status" value="1"/>
</dbReference>
<keyword id="KW-0285">Flavoprotein</keyword>
<keyword id="KW-0288">FMN</keyword>
<keyword id="KW-0560">Oxidoreductase</keyword>
<keyword id="KW-0664">Pyridoxine biosynthesis</keyword>
<keyword id="KW-1185">Reference proteome</keyword>
<feature type="chain" id="PRO_0000167762" description="Pyridoxine/pyridoxamine 5'-phosphate oxidase">
    <location>
        <begin position="1"/>
        <end position="211"/>
    </location>
</feature>
<feature type="binding site" evidence="1">
    <location>
        <begin position="8"/>
        <end position="11"/>
    </location>
    <ligand>
        <name>substrate</name>
    </ligand>
</feature>
<feature type="binding site" evidence="1">
    <location>
        <begin position="61"/>
        <end position="66"/>
    </location>
    <ligand>
        <name>FMN</name>
        <dbReference type="ChEBI" id="CHEBI:58210"/>
    </ligand>
</feature>
<feature type="binding site" evidence="1">
    <location>
        <position position="66"/>
    </location>
    <ligand>
        <name>substrate</name>
    </ligand>
</feature>
<feature type="binding site" evidence="1">
    <location>
        <begin position="76"/>
        <end position="77"/>
    </location>
    <ligand>
        <name>FMN</name>
        <dbReference type="ChEBI" id="CHEBI:58210"/>
    </ligand>
</feature>
<feature type="binding site" evidence="1">
    <location>
        <position position="82"/>
    </location>
    <ligand>
        <name>FMN</name>
        <dbReference type="ChEBI" id="CHEBI:58210"/>
    </ligand>
</feature>
<feature type="binding site" evidence="1">
    <location>
        <position position="83"/>
    </location>
    <ligand>
        <name>FMN</name>
        <dbReference type="ChEBI" id="CHEBI:58210"/>
    </ligand>
</feature>
<feature type="binding site" evidence="1">
    <location>
        <position position="105"/>
    </location>
    <ligand>
        <name>FMN</name>
        <dbReference type="ChEBI" id="CHEBI:58210"/>
    </ligand>
</feature>
<feature type="binding site" evidence="1">
    <location>
        <position position="123"/>
    </location>
    <ligand>
        <name>substrate</name>
    </ligand>
</feature>
<feature type="binding site" evidence="1">
    <location>
        <position position="127"/>
    </location>
    <ligand>
        <name>substrate</name>
    </ligand>
</feature>
<feature type="binding site" evidence="1">
    <location>
        <position position="131"/>
    </location>
    <ligand>
        <name>substrate</name>
    </ligand>
</feature>
<feature type="binding site" evidence="1">
    <location>
        <begin position="140"/>
        <end position="141"/>
    </location>
    <ligand>
        <name>FMN</name>
        <dbReference type="ChEBI" id="CHEBI:58210"/>
    </ligand>
</feature>
<feature type="binding site" evidence="1">
    <location>
        <position position="184"/>
    </location>
    <ligand>
        <name>FMN</name>
        <dbReference type="ChEBI" id="CHEBI:58210"/>
    </ligand>
</feature>
<feature type="binding site" evidence="1">
    <location>
        <begin position="190"/>
        <end position="192"/>
    </location>
    <ligand>
        <name>substrate</name>
    </ligand>
</feature>
<feature type="binding site" evidence="1">
    <location>
        <position position="194"/>
    </location>
    <ligand>
        <name>FMN</name>
        <dbReference type="ChEBI" id="CHEBI:58210"/>
    </ligand>
</feature>
<name>PDXH_THEVB</name>
<comment type="function">
    <text evidence="1">Catalyzes the oxidation of either pyridoxine 5'-phosphate (PNP) or pyridoxamine 5'-phosphate (PMP) into pyridoxal 5'-phosphate (PLP).</text>
</comment>
<comment type="catalytic activity">
    <reaction evidence="1">
        <text>pyridoxamine 5'-phosphate + O2 + H2O = pyridoxal 5'-phosphate + H2O2 + NH4(+)</text>
        <dbReference type="Rhea" id="RHEA:15817"/>
        <dbReference type="ChEBI" id="CHEBI:15377"/>
        <dbReference type="ChEBI" id="CHEBI:15379"/>
        <dbReference type="ChEBI" id="CHEBI:16240"/>
        <dbReference type="ChEBI" id="CHEBI:28938"/>
        <dbReference type="ChEBI" id="CHEBI:58451"/>
        <dbReference type="ChEBI" id="CHEBI:597326"/>
        <dbReference type="EC" id="1.4.3.5"/>
    </reaction>
</comment>
<comment type="catalytic activity">
    <reaction evidence="1">
        <text>pyridoxine 5'-phosphate + O2 = pyridoxal 5'-phosphate + H2O2</text>
        <dbReference type="Rhea" id="RHEA:15149"/>
        <dbReference type="ChEBI" id="CHEBI:15379"/>
        <dbReference type="ChEBI" id="CHEBI:16240"/>
        <dbReference type="ChEBI" id="CHEBI:58589"/>
        <dbReference type="ChEBI" id="CHEBI:597326"/>
        <dbReference type="EC" id="1.4.3.5"/>
    </reaction>
</comment>
<comment type="cofactor">
    <cofactor evidence="1">
        <name>FMN</name>
        <dbReference type="ChEBI" id="CHEBI:58210"/>
    </cofactor>
    <text evidence="1">Binds 1 FMN per subunit.</text>
</comment>
<comment type="pathway">
    <text evidence="1">Cofactor metabolism; pyridoxal 5'-phosphate salvage; pyridoxal 5'-phosphate from pyridoxamine 5'-phosphate: step 1/1.</text>
</comment>
<comment type="pathway">
    <text evidence="1">Cofactor metabolism; pyridoxal 5'-phosphate salvage; pyridoxal 5'-phosphate from pyridoxine 5'-phosphate: step 1/1.</text>
</comment>
<comment type="subunit">
    <text evidence="1">Homodimer.</text>
</comment>
<comment type="similarity">
    <text evidence="1">Belongs to the pyridoxamine 5'-phosphate oxidase family.</text>
</comment>
<reference key="1">
    <citation type="journal article" date="2002" name="DNA Res.">
        <title>Complete genome structure of the thermophilic cyanobacterium Thermosynechococcus elongatus BP-1.</title>
        <authorList>
            <person name="Nakamura Y."/>
            <person name="Kaneko T."/>
            <person name="Sato S."/>
            <person name="Ikeuchi M."/>
            <person name="Katoh H."/>
            <person name="Sasamoto S."/>
            <person name="Watanabe A."/>
            <person name="Iriguchi M."/>
            <person name="Kawashima K."/>
            <person name="Kimura T."/>
            <person name="Kishida Y."/>
            <person name="Kiyokawa C."/>
            <person name="Kohara M."/>
            <person name="Matsumoto M."/>
            <person name="Matsuno A."/>
            <person name="Nakazaki N."/>
            <person name="Shimpo S."/>
            <person name="Sugimoto M."/>
            <person name="Takeuchi C."/>
            <person name="Yamada M."/>
            <person name="Tabata S."/>
        </authorList>
    </citation>
    <scope>NUCLEOTIDE SEQUENCE [LARGE SCALE GENOMIC DNA]</scope>
    <source>
        <strain>NIES-2133 / IAM M-273 / BP-1</strain>
    </source>
</reference>
<gene>
    <name evidence="1" type="primary">pdxH</name>
    <name type="ordered locus">tll0331</name>
</gene>
<protein>
    <recommendedName>
        <fullName evidence="1">Pyridoxine/pyridoxamine 5'-phosphate oxidase</fullName>
        <ecNumber evidence="1">1.4.3.5</ecNumber>
    </recommendedName>
    <alternativeName>
        <fullName evidence="1">PNP/PMP oxidase</fullName>
        <shortName evidence="1">PNPOx</shortName>
    </alternativeName>
    <alternativeName>
        <fullName evidence="1">Pyridoxal 5'-phosphate synthase</fullName>
    </alternativeName>
</protein>
<accession>Q8DLZ5</accession>
<evidence type="ECO:0000255" key="1">
    <source>
        <dbReference type="HAMAP-Rule" id="MF_01629"/>
    </source>
</evidence>